<evidence type="ECO:0000255" key="1">
    <source>
        <dbReference type="HAMAP-Rule" id="MF_00382"/>
    </source>
</evidence>
<evidence type="ECO:0000305" key="2"/>
<sequence>MARVKGGVVSRKRRKRILKLAKGYYGAKHILFRTAKEQVMNSYYYAYRDRRQKKRDFRKLWITRINAAARMNGLSYSQLMHGLKLAEIEVNRKMLADLAVNDAVAFTALADAAKAKLGK</sequence>
<gene>
    <name evidence="1" type="primary">rplT</name>
    <name type="ordered locus">SPP_0967</name>
</gene>
<reference key="1">
    <citation type="journal article" date="2010" name="Genome Biol.">
        <title>Structure and dynamics of the pan-genome of Streptococcus pneumoniae and closely related species.</title>
        <authorList>
            <person name="Donati C."/>
            <person name="Hiller N.L."/>
            <person name="Tettelin H."/>
            <person name="Muzzi A."/>
            <person name="Croucher N.J."/>
            <person name="Angiuoli S.V."/>
            <person name="Oggioni M."/>
            <person name="Dunning Hotopp J.C."/>
            <person name="Hu F.Z."/>
            <person name="Riley D.R."/>
            <person name="Covacci A."/>
            <person name="Mitchell T.J."/>
            <person name="Bentley S.D."/>
            <person name="Kilian M."/>
            <person name="Ehrlich G.D."/>
            <person name="Rappuoli R."/>
            <person name="Moxon E.R."/>
            <person name="Masignani V."/>
        </authorList>
    </citation>
    <scope>NUCLEOTIDE SEQUENCE [LARGE SCALE GENOMIC DNA]</scope>
    <source>
        <strain>P1031</strain>
    </source>
</reference>
<proteinExistence type="inferred from homology"/>
<name>RL20_STRZP</name>
<keyword id="KW-0687">Ribonucleoprotein</keyword>
<keyword id="KW-0689">Ribosomal protein</keyword>
<keyword id="KW-0694">RNA-binding</keyword>
<keyword id="KW-0699">rRNA-binding</keyword>
<accession>C1CK42</accession>
<dbReference type="EMBL" id="CP000920">
    <property type="protein sequence ID" value="ACO22131.1"/>
    <property type="molecule type" value="Genomic_DNA"/>
</dbReference>
<dbReference type="RefSeq" id="WP_000124836.1">
    <property type="nucleotide sequence ID" value="NC_012467.1"/>
</dbReference>
<dbReference type="SMR" id="C1CK42"/>
<dbReference type="GeneID" id="45653697"/>
<dbReference type="KEGG" id="spp:SPP_0967"/>
<dbReference type="HOGENOM" id="CLU_123265_0_1_9"/>
<dbReference type="GO" id="GO:1990904">
    <property type="term" value="C:ribonucleoprotein complex"/>
    <property type="evidence" value="ECO:0007669"/>
    <property type="project" value="UniProtKB-KW"/>
</dbReference>
<dbReference type="GO" id="GO:0005840">
    <property type="term" value="C:ribosome"/>
    <property type="evidence" value="ECO:0007669"/>
    <property type="project" value="UniProtKB-KW"/>
</dbReference>
<dbReference type="GO" id="GO:0019843">
    <property type="term" value="F:rRNA binding"/>
    <property type="evidence" value="ECO:0007669"/>
    <property type="project" value="UniProtKB-UniRule"/>
</dbReference>
<dbReference type="GO" id="GO:0003735">
    <property type="term" value="F:structural constituent of ribosome"/>
    <property type="evidence" value="ECO:0007669"/>
    <property type="project" value="InterPro"/>
</dbReference>
<dbReference type="GO" id="GO:0000027">
    <property type="term" value="P:ribosomal large subunit assembly"/>
    <property type="evidence" value="ECO:0007669"/>
    <property type="project" value="UniProtKB-UniRule"/>
</dbReference>
<dbReference type="GO" id="GO:0006412">
    <property type="term" value="P:translation"/>
    <property type="evidence" value="ECO:0007669"/>
    <property type="project" value="InterPro"/>
</dbReference>
<dbReference type="CDD" id="cd07026">
    <property type="entry name" value="Ribosomal_L20"/>
    <property type="match status" value="1"/>
</dbReference>
<dbReference type="FunFam" id="1.10.1900.20:FF:000001">
    <property type="entry name" value="50S ribosomal protein L20"/>
    <property type="match status" value="1"/>
</dbReference>
<dbReference type="Gene3D" id="6.10.160.10">
    <property type="match status" value="1"/>
</dbReference>
<dbReference type="Gene3D" id="1.10.1900.20">
    <property type="entry name" value="Ribosomal protein L20"/>
    <property type="match status" value="1"/>
</dbReference>
<dbReference type="HAMAP" id="MF_00382">
    <property type="entry name" value="Ribosomal_bL20"/>
    <property type="match status" value="1"/>
</dbReference>
<dbReference type="InterPro" id="IPR005813">
    <property type="entry name" value="Ribosomal_bL20"/>
</dbReference>
<dbReference type="InterPro" id="IPR049946">
    <property type="entry name" value="RIBOSOMAL_L20_CS"/>
</dbReference>
<dbReference type="InterPro" id="IPR035566">
    <property type="entry name" value="Ribosomal_protein_bL20_C"/>
</dbReference>
<dbReference type="NCBIfam" id="TIGR01032">
    <property type="entry name" value="rplT_bact"/>
    <property type="match status" value="1"/>
</dbReference>
<dbReference type="PANTHER" id="PTHR10986">
    <property type="entry name" value="39S RIBOSOMAL PROTEIN L20"/>
    <property type="match status" value="1"/>
</dbReference>
<dbReference type="Pfam" id="PF00453">
    <property type="entry name" value="Ribosomal_L20"/>
    <property type="match status" value="1"/>
</dbReference>
<dbReference type="PRINTS" id="PR00062">
    <property type="entry name" value="RIBOSOMALL20"/>
</dbReference>
<dbReference type="SUPFAM" id="SSF74731">
    <property type="entry name" value="Ribosomal protein L20"/>
    <property type="match status" value="1"/>
</dbReference>
<dbReference type="PROSITE" id="PS00937">
    <property type="entry name" value="RIBOSOMAL_L20"/>
    <property type="match status" value="1"/>
</dbReference>
<comment type="function">
    <text evidence="1">Binds directly to 23S ribosomal RNA and is necessary for the in vitro assembly process of the 50S ribosomal subunit. It is not involved in the protein synthesizing functions of that subunit.</text>
</comment>
<comment type="similarity">
    <text evidence="1">Belongs to the bacterial ribosomal protein bL20 family.</text>
</comment>
<organism>
    <name type="scientific">Streptococcus pneumoniae (strain P1031)</name>
    <dbReference type="NCBI Taxonomy" id="488223"/>
    <lineage>
        <taxon>Bacteria</taxon>
        <taxon>Bacillati</taxon>
        <taxon>Bacillota</taxon>
        <taxon>Bacilli</taxon>
        <taxon>Lactobacillales</taxon>
        <taxon>Streptococcaceae</taxon>
        <taxon>Streptococcus</taxon>
    </lineage>
</organism>
<feature type="chain" id="PRO_1000193982" description="Large ribosomal subunit protein bL20">
    <location>
        <begin position="1"/>
        <end position="119"/>
    </location>
</feature>
<protein>
    <recommendedName>
        <fullName evidence="1">Large ribosomal subunit protein bL20</fullName>
    </recommendedName>
    <alternativeName>
        <fullName evidence="2">50S ribosomal protein L20</fullName>
    </alternativeName>
</protein>